<accession>Q7MA48</accession>
<gene>
    <name evidence="1" type="primary">nuoD</name>
    <name type="ordered locus">WS0475</name>
</gene>
<organism>
    <name type="scientific">Wolinella succinogenes (strain ATCC 29543 / DSM 1740 / CCUG 13145 / JCM 31913 / LMG 7466 / NCTC 11488 / FDC 602W)</name>
    <name type="common">Vibrio succinogenes</name>
    <dbReference type="NCBI Taxonomy" id="273121"/>
    <lineage>
        <taxon>Bacteria</taxon>
        <taxon>Pseudomonadati</taxon>
        <taxon>Campylobacterota</taxon>
        <taxon>Epsilonproteobacteria</taxon>
        <taxon>Campylobacterales</taxon>
        <taxon>Helicobacteraceae</taxon>
        <taxon>Wolinella</taxon>
    </lineage>
</organism>
<proteinExistence type="inferred from homology"/>
<comment type="function">
    <text evidence="1">NDH-1 shuttles electrons from NADH, via FMN and iron-sulfur (Fe-S) centers, to quinones in the respiratory chain. The immediate electron acceptor for the enzyme in this species is believed to be ubiquinone. Couples the redox reaction to proton translocation (for every two electrons transferred, four hydrogen ions are translocated across the cytoplasmic membrane), and thus conserves the redox energy in a proton gradient.</text>
</comment>
<comment type="catalytic activity">
    <reaction evidence="1">
        <text>a quinone + NADH + 5 H(+)(in) = a quinol + NAD(+) + 4 H(+)(out)</text>
        <dbReference type="Rhea" id="RHEA:57888"/>
        <dbReference type="ChEBI" id="CHEBI:15378"/>
        <dbReference type="ChEBI" id="CHEBI:24646"/>
        <dbReference type="ChEBI" id="CHEBI:57540"/>
        <dbReference type="ChEBI" id="CHEBI:57945"/>
        <dbReference type="ChEBI" id="CHEBI:132124"/>
    </reaction>
</comment>
<comment type="subunit">
    <text evidence="1">NDH-1 is composed of 14 different subunits. Subunits NuoB, C, D, E, F, and G constitute the peripheral sector of the complex.</text>
</comment>
<comment type="subcellular location">
    <subcellularLocation>
        <location evidence="1">Cell inner membrane</location>
        <topology evidence="1">Peripheral membrane protein</topology>
        <orientation evidence="1">Cytoplasmic side</orientation>
    </subcellularLocation>
</comment>
<comment type="similarity">
    <text evidence="1">Belongs to the complex I 49 kDa subunit family.</text>
</comment>
<keyword id="KW-0997">Cell inner membrane</keyword>
<keyword id="KW-1003">Cell membrane</keyword>
<keyword id="KW-0472">Membrane</keyword>
<keyword id="KW-0520">NAD</keyword>
<keyword id="KW-0874">Quinone</keyword>
<keyword id="KW-1185">Reference proteome</keyword>
<keyword id="KW-1278">Translocase</keyword>
<keyword id="KW-0813">Transport</keyword>
<keyword id="KW-0830">Ubiquinone</keyword>
<reference key="1">
    <citation type="journal article" date="2003" name="Proc. Natl. Acad. Sci. U.S.A.">
        <title>Complete genome sequence and analysis of Wolinella succinogenes.</title>
        <authorList>
            <person name="Baar C."/>
            <person name="Eppinger M."/>
            <person name="Raddatz G."/>
            <person name="Simon J."/>
            <person name="Lanz C."/>
            <person name="Klimmek O."/>
            <person name="Nandakumar R."/>
            <person name="Gross R."/>
            <person name="Rosinus A."/>
            <person name="Keller H."/>
            <person name="Jagtap P."/>
            <person name="Linke B."/>
            <person name="Meyer F."/>
            <person name="Lederer H."/>
            <person name="Schuster S.C."/>
        </authorList>
    </citation>
    <scope>NUCLEOTIDE SEQUENCE [LARGE SCALE GENOMIC DNA]</scope>
    <source>
        <strain>ATCC 29543 / DSM 1740 / CCUG 13145 / JCM 31913 / LMG 7466 / NCTC 11488 / FDC 602W</strain>
    </source>
</reference>
<protein>
    <recommendedName>
        <fullName evidence="1">NADH-quinone oxidoreductase subunit D</fullName>
        <ecNumber evidence="1">7.1.1.-</ecNumber>
    </recommendedName>
    <alternativeName>
        <fullName evidence="1">NADH dehydrogenase I subunit D</fullName>
    </alternativeName>
    <alternativeName>
        <fullName evidence="1">NDH-1 subunit D</fullName>
    </alternativeName>
</protein>
<sequence length="408" mass="46799">MQIPNRLQPFYENLVFERHDNQMVINFGPQHPSAHGQLRLILELEGEKVTRAVPDVGYLHRGMEKMGENMIYNEFIPTTDRMDYIAASSNNHAFALTVEKLLGIEVPRRAKVIRMMIVELNRIISHLFWLATHALDVGAMSIFLYCFREREFAMDLMEDYCGARLTHSSIRIGGVPLDLPAGWLEKLKSFLEKMPENIALYEGLLSENRIWKMRLENVGIITPEMAKSWGCSGVALRGSGIQWDLRKEQPYELYDEVEFDIPVSDSGDSYGRYKLYMEEMRQTVKILHQLIEMYPSTSSEIMAHAPQYISAPKEQIMTQNYSLMQHFVLVTQGMRPPVGEVYCATESPKGELGFFIRSEGEPYPYRLKIRAPSFYHTGILQDLLPGGYIADVVTIIGNLNIVFGEIDR</sequence>
<feature type="chain" id="PRO_0000371947" description="NADH-quinone oxidoreductase subunit D">
    <location>
        <begin position="1"/>
        <end position="408"/>
    </location>
</feature>
<evidence type="ECO:0000255" key="1">
    <source>
        <dbReference type="HAMAP-Rule" id="MF_01358"/>
    </source>
</evidence>
<dbReference type="EC" id="7.1.1.-" evidence="1"/>
<dbReference type="EMBL" id="BX571658">
    <property type="protein sequence ID" value="CAE09615.1"/>
    <property type="molecule type" value="Genomic_DNA"/>
</dbReference>
<dbReference type="RefSeq" id="WP_011138415.1">
    <property type="nucleotide sequence ID" value="NC_005090.1"/>
</dbReference>
<dbReference type="SMR" id="Q7MA48"/>
<dbReference type="STRING" id="273121.WS0475"/>
<dbReference type="KEGG" id="wsu:WS0475"/>
<dbReference type="eggNOG" id="COG0649">
    <property type="taxonomic scope" value="Bacteria"/>
</dbReference>
<dbReference type="HOGENOM" id="CLU_015134_1_2_7"/>
<dbReference type="Proteomes" id="UP000000422">
    <property type="component" value="Chromosome"/>
</dbReference>
<dbReference type="GO" id="GO:0005886">
    <property type="term" value="C:plasma membrane"/>
    <property type="evidence" value="ECO:0007669"/>
    <property type="project" value="UniProtKB-SubCell"/>
</dbReference>
<dbReference type="GO" id="GO:0051287">
    <property type="term" value="F:NAD binding"/>
    <property type="evidence" value="ECO:0007669"/>
    <property type="project" value="InterPro"/>
</dbReference>
<dbReference type="GO" id="GO:0050136">
    <property type="term" value="F:NADH:ubiquinone reductase (non-electrogenic) activity"/>
    <property type="evidence" value="ECO:0007669"/>
    <property type="project" value="UniProtKB-UniRule"/>
</dbReference>
<dbReference type="GO" id="GO:0048038">
    <property type="term" value="F:quinone binding"/>
    <property type="evidence" value="ECO:0007669"/>
    <property type="project" value="UniProtKB-KW"/>
</dbReference>
<dbReference type="Gene3D" id="1.10.645.10">
    <property type="entry name" value="Cytochrome-c3 Hydrogenase, chain B"/>
    <property type="match status" value="1"/>
</dbReference>
<dbReference type="HAMAP" id="MF_01358">
    <property type="entry name" value="NDH1_NuoD"/>
    <property type="match status" value="1"/>
</dbReference>
<dbReference type="InterPro" id="IPR001135">
    <property type="entry name" value="NADH_Q_OxRdtase_suD"/>
</dbReference>
<dbReference type="InterPro" id="IPR022885">
    <property type="entry name" value="NDH1_su_D/H"/>
</dbReference>
<dbReference type="InterPro" id="IPR029014">
    <property type="entry name" value="NiFe-Hase_large"/>
</dbReference>
<dbReference type="NCBIfam" id="TIGR01962">
    <property type="entry name" value="NuoD"/>
    <property type="match status" value="1"/>
</dbReference>
<dbReference type="NCBIfam" id="NF004739">
    <property type="entry name" value="PRK06075.1"/>
    <property type="match status" value="1"/>
</dbReference>
<dbReference type="PANTHER" id="PTHR11993:SF10">
    <property type="entry name" value="NADH DEHYDROGENASE [UBIQUINONE] IRON-SULFUR PROTEIN 2, MITOCHONDRIAL"/>
    <property type="match status" value="1"/>
</dbReference>
<dbReference type="PANTHER" id="PTHR11993">
    <property type="entry name" value="NADH-UBIQUINONE OXIDOREDUCTASE 49 KDA SUBUNIT"/>
    <property type="match status" value="1"/>
</dbReference>
<dbReference type="Pfam" id="PF00346">
    <property type="entry name" value="Complex1_49kDa"/>
    <property type="match status" value="1"/>
</dbReference>
<dbReference type="SUPFAM" id="SSF56762">
    <property type="entry name" value="HydB/Nqo4-like"/>
    <property type="match status" value="1"/>
</dbReference>
<name>NUOD_WOLSU</name>